<feature type="signal peptide" evidence="2">
    <location>
        <begin position="1"/>
        <end position="28"/>
    </location>
</feature>
<feature type="chain" id="PRO_0000417417" description="Tetrathionate reductase subunit B">
    <location>
        <begin position="29"/>
        <end position="207"/>
    </location>
</feature>
<feature type="domain" description="4Fe-4S ferredoxin-type 1" evidence="3">
    <location>
        <begin position="34"/>
        <end position="63"/>
    </location>
</feature>
<feature type="domain" description="4Fe-4S ferredoxin-type 2" evidence="3">
    <location>
        <begin position="75"/>
        <end position="106"/>
    </location>
</feature>
<feature type="domain" description="4Fe-4S ferredoxin-type 3" evidence="3">
    <location>
        <begin position="107"/>
        <end position="136"/>
    </location>
</feature>
<feature type="binding site" evidence="1">
    <location>
        <position position="43"/>
    </location>
    <ligand>
        <name>[4Fe-4S] cluster</name>
        <dbReference type="ChEBI" id="CHEBI:49883"/>
        <label>1</label>
    </ligand>
</feature>
<feature type="binding site" evidence="1">
    <location>
        <position position="46"/>
    </location>
    <ligand>
        <name>[4Fe-4S] cluster</name>
        <dbReference type="ChEBI" id="CHEBI:49883"/>
        <label>1</label>
    </ligand>
</feature>
<feature type="binding site" evidence="1">
    <location>
        <position position="49"/>
    </location>
    <ligand>
        <name>[4Fe-4S] cluster</name>
        <dbReference type="ChEBI" id="CHEBI:49883"/>
        <label>1</label>
    </ligand>
</feature>
<feature type="binding site" evidence="1">
    <location>
        <position position="53"/>
    </location>
    <ligand>
        <name>[4Fe-4S] cluster</name>
        <dbReference type="ChEBI" id="CHEBI:49883"/>
        <label>2</label>
    </ligand>
</feature>
<feature type="binding site" evidence="1">
    <location>
        <position position="84"/>
    </location>
    <ligand>
        <name>[4Fe-4S] cluster</name>
        <dbReference type="ChEBI" id="CHEBI:49883"/>
        <label>3</label>
    </ligand>
</feature>
<feature type="binding site" evidence="1">
    <location>
        <position position="87"/>
    </location>
    <ligand>
        <name>[4Fe-4S] cluster</name>
        <dbReference type="ChEBI" id="CHEBI:49883"/>
        <label>3</label>
    </ligand>
</feature>
<feature type="binding site" evidence="1">
    <location>
        <position position="92"/>
    </location>
    <ligand>
        <name>[4Fe-4S] cluster</name>
        <dbReference type="ChEBI" id="CHEBI:49883"/>
        <label>3</label>
    </ligand>
</feature>
<feature type="binding site" evidence="1">
    <location>
        <position position="96"/>
    </location>
    <ligand>
        <name>[4Fe-4S] cluster</name>
        <dbReference type="ChEBI" id="CHEBI:49883"/>
        <label>4</label>
    </ligand>
</feature>
<feature type="binding site" evidence="1">
    <location>
        <position position="116"/>
    </location>
    <ligand>
        <name>[4Fe-4S] cluster</name>
        <dbReference type="ChEBI" id="CHEBI:49883"/>
        <label>4</label>
    </ligand>
</feature>
<feature type="binding site" evidence="1">
    <location>
        <position position="119"/>
    </location>
    <ligand>
        <name>[4Fe-4S] cluster</name>
        <dbReference type="ChEBI" id="CHEBI:49883"/>
        <label>4</label>
    </ligand>
</feature>
<feature type="binding site" evidence="1">
    <location>
        <position position="122"/>
    </location>
    <ligand>
        <name>[4Fe-4S] cluster</name>
        <dbReference type="ChEBI" id="CHEBI:49883"/>
        <label>4</label>
    </ligand>
</feature>
<feature type="binding site" evidence="1">
    <location>
        <position position="126"/>
    </location>
    <ligand>
        <name>[4Fe-4S] cluster</name>
        <dbReference type="ChEBI" id="CHEBI:49883"/>
        <label>3</label>
    </ligand>
</feature>
<feature type="binding site" evidence="1">
    <location>
        <position position="143"/>
    </location>
    <ligand>
        <name>[4Fe-4S] cluster</name>
        <dbReference type="ChEBI" id="CHEBI:49883"/>
        <label>2</label>
    </ligand>
</feature>
<feature type="binding site" evidence="1">
    <location>
        <position position="146"/>
    </location>
    <ligand>
        <name>[4Fe-4S] cluster</name>
        <dbReference type="ChEBI" id="CHEBI:49883"/>
        <label>2</label>
    </ligand>
</feature>
<feature type="binding site" evidence="1">
    <location>
        <position position="157"/>
    </location>
    <ligand>
        <name>[4Fe-4S] cluster</name>
        <dbReference type="ChEBI" id="CHEBI:49883"/>
        <label>2</label>
    </ligand>
</feature>
<feature type="binding site" evidence="1">
    <location>
        <position position="161"/>
    </location>
    <ligand>
        <name>[4Fe-4S] cluster</name>
        <dbReference type="ChEBI" id="CHEBI:49883"/>
        <label>1</label>
    </ligand>
</feature>
<accession>O30080</accession>
<sequence length="207" mass="22871">MLISKTLIFYQVVNIVSQKGSGKRRWKMENGDRYVYVVDVSKCYGCLSCVAACAAENNVPVGYFRTWVERYAMNGRVAFVPKICNHCDNPSCVHACPVNATYKTEEGLVLIDDEICIGCGACIQACPYGARFRNPVKGTADKCTLCNHRIPERLPACVESCPTSARVYGKMSDKAVKEILSKKNAVVLKAYTGNEPHTYYVSLTGVE</sequence>
<protein>
    <recommendedName>
        <fullName>Tetrathionate reductase subunit B</fullName>
    </recommendedName>
    <alternativeName>
        <fullName>Tetrathionate reductase electron transport protein</fullName>
    </alternativeName>
</protein>
<dbReference type="EMBL" id="AE000782">
    <property type="protein sequence ID" value="AAB91070.1"/>
    <property type="status" value="ALT_INIT"/>
    <property type="molecule type" value="Genomic_DNA"/>
</dbReference>
<dbReference type="PIR" id="E69269">
    <property type="entry name" value="E69269"/>
</dbReference>
<dbReference type="SMR" id="O30080"/>
<dbReference type="STRING" id="224325.AF_0157"/>
<dbReference type="PaxDb" id="224325-AF_0157"/>
<dbReference type="EnsemblBacteria" id="AAB91070">
    <property type="protein sequence ID" value="AAB91070"/>
    <property type="gene ID" value="AF_0157"/>
</dbReference>
<dbReference type="KEGG" id="afu:AF_0157"/>
<dbReference type="eggNOG" id="arCOG01500">
    <property type="taxonomic scope" value="Archaea"/>
</dbReference>
<dbReference type="HOGENOM" id="CLU_043374_1_1_2"/>
<dbReference type="Proteomes" id="UP000002199">
    <property type="component" value="Chromosome"/>
</dbReference>
<dbReference type="GO" id="GO:0005886">
    <property type="term" value="C:plasma membrane"/>
    <property type="evidence" value="ECO:0007669"/>
    <property type="project" value="UniProtKB-SubCell"/>
</dbReference>
<dbReference type="GO" id="GO:0051539">
    <property type="term" value="F:4 iron, 4 sulfur cluster binding"/>
    <property type="evidence" value="ECO:0007669"/>
    <property type="project" value="UniProtKB-KW"/>
</dbReference>
<dbReference type="GO" id="GO:0046872">
    <property type="term" value="F:metal ion binding"/>
    <property type="evidence" value="ECO:0007669"/>
    <property type="project" value="UniProtKB-KW"/>
</dbReference>
<dbReference type="GO" id="GO:0016491">
    <property type="term" value="F:oxidoreductase activity"/>
    <property type="evidence" value="ECO:0007669"/>
    <property type="project" value="UniProtKB-ARBA"/>
</dbReference>
<dbReference type="CDD" id="cd10551">
    <property type="entry name" value="PsrB"/>
    <property type="match status" value="1"/>
</dbReference>
<dbReference type="Gene3D" id="3.30.70.20">
    <property type="match status" value="2"/>
</dbReference>
<dbReference type="InterPro" id="IPR017896">
    <property type="entry name" value="4Fe4S_Fe-S-bd"/>
</dbReference>
<dbReference type="InterPro" id="IPR017900">
    <property type="entry name" value="4Fe4S_Fe_S_CS"/>
</dbReference>
<dbReference type="InterPro" id="IPR050954">
    <property type="entry name" value="ET_IronSulfur_Cluster-Binding"/>
</dbReference>
<dbReference type="PANTHER" id="PTHR43177">
    <property type="entry name" value="PROTEIN NRFC"/>
    <property type="match status" value="1"/>
</dbReference>
<dbReference type="PANTHER" id="PTHR43177:SF3">
    <property type="entry name" value="PROTEIN NRFC HOMOLOG"/>
    <property type="match status" value="1"/>
</dbReference>
<dbReference type="Pfam" id="PF13247">
    <property type="entry name" value="Fer4_11"/>
    <property type="match status" value="1"/>
</dbReference>
<dbReference type="SUPFAM" id="SSF54862">
    <property type="entry name" value="4Fe-4S ferredoxins"/>
    <property type="match status" value="1"/>
</dbReference>
<dbReference type="PROSITE" id="PS00198">
    <property type="entry name" value="4FE4S_FER_1"/>
    <property type="match status" value="1"/>
</dbReference>
<dbReference type="PROSITE" id="PS51379">
    <property type="entry name" value="4FE4S_FER_2"/>
    <property type="match status" value="3"/>
</dbReference>
<gene>
    <name type="primary">ttrB</name>
    <name type="ordered locus">AF_0157</name>
</gene>
<keyword id="KW-0004">4Fe-4S</keyword>
<keyword id="KW-1003">Cell membrane</keyword>
<keyword id="KW-0249">Electron transport</keyword>
<keyword id="KW-0408">Iron</keyword>
<keyword id="KW-0411">Iron-sulfur</keyword>
<keyword id="KW-0472">Membrane</keyword>
<keyword id="KW-0479">Metal-binding</keyword>
<keyword id="KW-1185">Reference proteome</keyword>
<keyword id="KW-0677">Repeat</keyword>
<keyword id="KW-0732">Signal</keyword>
<keyword id="KW-0813">Transport</keyword>
<name>TTRB_ARCFU</name>
<organism>
    <name type="scientific">Archaeoglobus fulgidus (strain ATCC 49558 / DSM 4304 / JCM 9628 / NBRC 100126 / VC-16)</name>
    <dbReference type="NCBI Taxonomy" id="224325"/>
    <lineage>
        <taxon>Archaea</taxon>
        <taxon>Methanobacteriati</taxon>
        <taxon>Methanobacteriota</taxon>
        <taxon>Archaeoglobi</taxon>
        <taxon>Archaeoglobales</taxon>
        <taxon>Archaeoglobaceae</taxon>
        <taxon>Archaeoglobus</taxon>
    </lineage>
</organism>
<reference key="1">
    <citation type="journal article" date="1997" name="Nature">
        <title>The complete genome sequence of the hyperthermophilic, sulphate-reducing archaeon Archaeoglobus fulgidus.</title>
        <authorList>
            <person name="Klenk H.-P."/>
            <person name="Clayton R.A."/>
            <person name="Tomb J.-F."/>
            <person name="White O."/>
            <person name="Nelson K.E."/>
            <person name="Ketchum K.A."/>
            <person name="Dodson R.J."/>
            <person name="Gwinn M.L."/>
            <person name="Hickey E.K."/>
            <person name="Peterson J.D."/>
            <person name="Richardson D.L."/>
            <person name="Kerlavage A.R."/>
            <person name="Graham D.E."/>
            <person name="Kyrpides N.C."/>
            <person name="Fleischmann R.D."/>
            <person name="Quackenbush J."/>
            <person name="Lee N.H."/>
            <person name="Sutton G.G."/>
            <person name="Gill S.R."/>
            <person name="Kirkness E.F."/>
            <person name="Dougherty B.A."/>
            <person name="McKenney K."/>
            <person name="Adams M.D."/>
            <person name="Loftus B.J."/>
            <person name="Peterson S.N."/>
            <person name="Reich C.I."/>
            <person name="McNeil L.K."/>
            <person name="Badger J.H."/>
            <person name="Glodek A."/>
            <person name="Zhou L."/>
            <person name="Overbeek R."/>
            <person name="Gocayne J.D."/>
            <person name="Weidman J.F."/>
            <person name="McDonald L.A."/>
            <person name="Utterback T.R."/>
            <person name="Cotton M.D."/>
            <person name="Spriggs T."/>
            <person name="Artiach P."/>
            <person name="Kaine B.P."/>
            <person name="Sykes S.M."/>
            <person name="Sadow P.W."/>
            <person name="D'Andrea K.P."/>
            <person name="Bowman C."/>
            <person name="Fujii C."/>
            <person name="Garland S.A."/>
            <person name="Mason T.M."/>
            <person name="Olsen G.J."/>
            <person name="Fraser C.M."/>
            <person name="Smith H.O."/>
            <person name="Woese C.R."/>
            <person name="Venter J.C."/>
        </authorList>
    </citation>
    <scope>NUCLEOTIDE SEQUENCE [LARGE SCALE GENOMIC DNA]</scope>
    <source>
        <strain>ATCC 49558 / DSM 4304 / JCM 9628 / NBRC 100126 / VC-16</strain>
    </source>
</reference>
<reference key="2">
    <citation type="journal article" date="2012" name="Biochemistry">
        <title>Conserved signal peptide recognition systems across the prokaryotic domains.</title>
        <authorList>
            <person name="Coulthurst S.J."/>
            <person name="Dawson A."/>
            <person name="Hunter W.N."/>
            <person name="Sargent F."/>
        </authorList>
    </citation>
    <scope>GENE NAME</scope>
    <source>
        <strain>ATCC 49558 / DSM 4304 / JCM 9628 / NBRC 100126 / VC-16</strain>
    </source>
</reference>
<comment type="function">
    <text evidence="1">Part of a membrane-bound tetrathionate reductase that catalyzes the reduction of tetrathionate to thiosulfate. TtrB is probably involved in transfer of electrons from TtrC to TtrA (By similarity).</text>
</comment>
<comment type="subunit">
    <text evidence="1">Probably composed of three subunits: TtrA, TtrB and TtrC.</text>
</comment>
<comment type="subcellular location">
    <subcellularLocation>
        <location evidence="1">Cell membrane</location>
        <topology evidence="1">Peripheral membrane protein</topology>
    </subcellularLocation>
</comment>
<comment type="sequence caution" evidence="4">
    <conflict type="erroneous initiation">
        <sequence resource="EMBL-CDS" id="AAB91070"/>
    </conflict>
    <text>Truncated N-terminus.</text>
</comment>
<proteinExistence type="inferred from homology"/>
<evidence type="ECO:0000250" key="1"/>
<evidence type="ECO:0000255" key="2"/>
<evidence type="ECO:0000255" key="3">
    <source>
        <dbReference type="PROSITE-ProRule" id="PRU00711"/>
    </source>
</evidence>
<evidence type="ECO:0000305" key="4"/>